<keyword id="KW-0963">Cytoplasm</keyword>
<keyword id="KW-0444">Lipid biosynthesis</keyword>
<keyword id="KW-0443">Lipid metabolism</keyword>
<keyword id="KW-0520">NAD</keyword>
<keyword id="KW-0521">NADP</keyword>
<keyword id="KW-0547">Nucleotide-binding</keyword>
<keyword id="KW-0560">Oxidoreductase</keyword>
<keyword id="KW-0594">Phospholipid biosynthesis</keyword>
<keyword id="KW-1208">Phospholipid metabolism</keyword>
<keyword id="KW-1185">Reference proteome</keyword>
<name>GPDA_PHOPR</name>
<reference key="1">
    <citation type="journal article" date="2005" name="Science">
        <title>Life at depth: Photobacterium profundum genome sequence and expression analysis.</title>
        <authorList>
            <person name="Vezzi A."/>
            <person name="Campanaro S."/>
            <person name="D'Angelo M."/>
            <person name="Simonato F."/>
            <person name="Vitulo N."/>
            <person name="Lauro F.M."/>
            <person name="Cestaro A."/>
            <person name="Malacrida G."/>
            <person name="Simionati B."/>
            <person name="Cannata N."/>
            <person name="Romualdi C."/>
            <person name="Bartlett D.H."/>
            <person name="Valle G."/>
        </authorList>
    </citation>
    <scope>NUCLEOTIDE SEQUENCE [LARGE SCALE GENOMIC DNA]</scope>
    <source>
        <strain>ATCC BAA-1253 / SS9</strain>
    </source>
</reference>
<accession>Q6LVK9</accession>
<evidence type="ECO:0000255" key="1">
    <source>
        <dbReference type="HAMAP-Rule" id="MF_00394"/>
    </source>
</evidence>
<proteinExistence type="inferred from homology"/>
<gene>
    <name evidence="1" type="primary">gpsA</name>
    <name type="ordered locus">PBPRA0227</name>
</gene>
<dbReference type="EC" id="1.1.1.94" evidence="1"/>
<dbReference type="EMBL" id="CR378663">
    <property type="protein sequence ID" value="CAG18666.1"/>
    <property type="molecule type" value="Genomic_DNA"/>
</dbReference>
<dbReference type="RefSeq" id="WP_011217042.1">
    <property type="nucleotide sequence ID" value="NC_006370.1"/>
</dbReference>
<dbReference type="SMR" id="Q6LVK9"/>
<dbReference type="STRING" id="298386.PBPRA0227"/>
<dbReference type="KEGG" id="ppr:PBPRA0227"/>
<dbReference type="eggNOG" id="COG0240">
    <property type="taxonomic scope" value="Bacteria"/>
</dbReference>
<dbReference type="HOGENOM" id="CLU_033449_0_2_6"/>
<dbReference type="UniPathway" id="UPA00940"/>
<dbReference type="Proteomes" id="UP000000593">
    <property type="component" value="Chromosome 1"/>
</dbReference>
<dbReference type="GO" id="GO:0005829">
    <property type="term" value="C:cytosol"/>
    <property type="evidence" value="ECO:0007669"/>
    <property type="project" value="TreeGrafter"/>
</dbReference>
<dbReference type="GO" id="GO:0047952">
    <property type="term" value="F:glycerol-3-phosphate dehydrogenase [NAD(P)+] activity"/>
    <property type="evidence" value="ECO:0007669"/>
    <property type="project" value="UniProtKB-UniRule"/>
</dbReference>
<dbReference type="GO" id="GO:0051287">
    <property type="term" value="F:NAD binding"/>
    <property type="evidence" value="ECO:0007669"/>
    <property type="project" value="InterPro"/>
</dbReference>
<dbReference type="GO" id="GO:0005975">
    <property type="term" value="P:carbohydrate metabolic process"/>
    <property type="evidence" value="ECO:0007669"/>
    <property type="project" value="InterPro"/>
</dbReference>
<dbReference type="GO" id="GO:0046167">
    <property type="term" value="P:glycerol-3-phosphate biosynthetic process"/>
    <property type="evidence" value="ECO:0007669"/>
    <property type="project" value="UniProtKB-UniRule"/>
</dbReference>
<dbReference type="GO" id="GO:0046168">
    <property type="term" value="P:glycerol-3-phosphate catabolic process"/>
    <property type="evidence" value="ECO:0007669"/>
    <property type="project" value="InterPro"/>
</dbReference>
<dbReference type="GO" id="GO:0046474">
    <property type="term" value="P:glycerophospholipid biosynthetic process"/>
    <property type="evidence" value="ECO:0007669"/>
    <property type="project" value="TreeGrafter"/>
</dbReference>
<dbReference type="FunFam" id="1.10.1040.10:FF:000001">
    <property type="entry name" value="Glycerol-3-phosphate dehydrogenase [NAD(P)+]"/>
    <property type="match status" value="1"/>
</dbReference>
<dbReference type="FunFam" id="3.40.50.720:FF:000019">
    <property type="entry name" value="Glycerol-3-phosphate dehydrogenase [NAD(P)+]"/>
    <property type="match status" value="1"/>
</dbReference>
<dbReference type="Gene3D" id="1.10.1040.10">
    <property type="entry name" value="N-(1-d-carboxylethyl)-l-norvaline Dehydrogenase, domain 2"/>
    <property type="match status" value="1"/>
</dbReference>
<dbReference type="Gene3D" id="3.40.50.720">
    <property type="entry name" value="NAD(P)-binding Rossmann-like Domain"/>
    <property type="match status" value="1"/>
</dbReference>
<dbReference type="HAMAP" id="MF_00394">
    <property type="entry name" value="NAD_Glyc3P_dehydrog"/>
    <property type="match status" value="1"/>
</dbReference>
<dbReference type="InterPro" id="IPR008927">
    <property type="entry name" value="6-PGluconate_DH-like_C_sf"/>
</dbReference>
<dbReference type="InterPro" id="IPR013328">
    <property type="entry name" value="6PGD_dom2"/>
</dbReference>
<dbReference type="InterPro" id="IPR006168">
    <property type="entry name" value="G3P_DH_NAD-dep"/>
</dbReference>
<dbReference type="InterPro" id="IPR006109">
    <property type="entry name" value="G3P_DH_NAD-dep_C"/>
</dbReference>
<dbReference type="InterPro" id="IPR011128">
    <property type="entry name" value="G3P_DH_NAD-dep_N"/>
</dbReference>
<dbReference type="InterPro" id="IPR036291">
    <property type="entry name" value="NAD(P)-bd_dom_sf"/>
</dbReference>
<dbReference type="NCBIfam" id="NF000939">
    <property type="entry name" value="PRK00094.1-1"/>
    <property type="match status" value="1"/>
</dbReference>
<dbReference type="NCBIfam" id="NF000940">
    <property type="entry name" value="PRK00094.1-2"/>
    <property type="match status" value="1"/>
</dbReference>
<dbReference type="NCBIfam" id="NF000942">
    <property type="entry name" value="PRK00094.1-4"/>
    <property type="match status" value="1"/>
</dbReference>
<dbReference type="PANTHER" id="PTHR11728">
    <property type="entry name" value="GLYCEROL-3-PHOSPHATE DEHYDROGENASE"/>
    <property type="match status" value="1"/>
</dbReference>
<dbReference type="PANTHER" id="PTHR11728:SF1">
    <property type="entry name" value="GLYCEROL-3-PHOSPHATE DEHYDROGENASE [NAD(+)] 2, CHLOROPLASTIC"/>
    <property type="match status" value="1"/>
</dbReference>
<dbReference type="Pfam" id="PF07479">
    <property type="entry name" value="NAD_Gly3P_dh_C"/>
    <property type="match status" value="1"/>
</dbReference>
<dbReference type="Pfam" id="PF01210">
    <property type="entry name" value="NAD_Gly3P_dh_N"/>
    <property type="match status" value="1"/>
</dbReference>
<dbReference type="PIRSF" id="PIRSF000114">
    <property type="entry name" value="Glycerol-3-P_dh"/>
    <property type="match status" value="1"/>
</dbReference>
<dbReference type="PRINTS" id="PR00077">
    <property type="entry name" value="GPDHDRGNASE"/>
</dbReference>
<dbReference type="SUPFAM" id="SSF48179">
    <property type="entry name" value="6-phosphogluconate dehydrogenase C-terminal domain-like"/>
    <property type="match status" value="1"/>
</dbReference>
<dbReference type="SUPFAM" id="SSF51735">
    <property type="entry name" value="NAD(P)-binding Rossmann-fold domains"/>
    <property type="match status" value="1"/>
</dbReference>
<dbReference type="PROSITE" id="PS00957">
    <property type="entry name" value="NAD_G3PDH"/>
    <property type="match status" value="1"/>
</dbReference>
<protein>
    <recommendedName>
        <fullName evidence="1">Glycerol-3-phosphate dehydrogenase [NAD(P)+]</fullName>
        <ecNumber evidence="1">1.1.1.94</ecNumber>
    </recommendedName>
    <alternativeName>
        <fullName evidence="1">NAD(P)(+)-dependent glycerol-3-phosphate dehydrogenase</fullName>
    </alternativeName>
    <alternativeName>
        <fullName evidence="1">NAD(P)H-dependent dihydroxyacetone-phosphate reductase</fullName>
    </alternativeName>
</protein>
<feature type="chain" id="PRO_0000138007" description="Glycerol-3-phosphate dehydrogenase [NAD(P)+]">
    <location>
        <begin position="1"/>
        <end position="338"/>
    </location>
</feature>
<feature type="active site" description="Proton acceptor" evidence="1">
    <location>
        <position position="198"/>
    </location>
</feature>
<feature type="binding site" evidence="1">
    <location>
        <position position="18"/>
    </location>
    <ligand>
        <name>NADPH</name>
        <dbReference type="ChEBI" id="CHEBI:57783"/>
    </ligand>
</feature>
<feature type="binding site" evidence="1">
    <location>
        <position position="19"/>
    </location>
    <ligand>
        <name>NADPH</name>
        <dbReference type="ChEBI" id="CHEBI:57783"/>
    </ligand>
</feature>
<feature type="binding site" evidence="1">
    <location>
        <position position="39"/>
    </location>
    <ligand>
        <name>NADPH</name>
        <dbReference type="ChEBI" id="CHEBI:57783"/>
    </ligand>
</feature>
<feature type="binding site" evidence="1">
    <location>
        <position position="113"/>
    </location>
    <ligand>
        <name>NADPH</name>
        <dbReference type="ChEBI" id="CHEBI:57783"/>
    </ligand>
</feature>
<feature type="binding site" evidence="1">
    <location>
        <position position="113"/>
    </location>
    <ligand>
        <name>sn-glycerol 3-phosphate</name>
        <dbReference type="ChEBI" id="CHEBI:57597"/>
    </ligand>
</feature>
<feature type="binding site" evidence="1">
    <location>
        <position position="142"/>
    </location>
    <ligand>
        <name>sn-glycerol 3-phosphate</name>
        <dbReference type="ChEBI" id="CHEBI:57597"/>
    </ligand>
</feature>
<feature type="binding site" evidence="1">
    <location>
        <position position="144"/>
    </location>
    <ligand>
        <name>sn-glycerol 3-phosphate</name>
        <dbReference type="ChEBI" id="CHEBI:57597"/>
    </ligand>
</feature>
<feature type="binding site" evidence="1">
    <location>
        <position position="146"/>
    </location>
    <ligand>
        <name>NADPH</name>
        <dbReference type="ChEBI" id="CHEBI:57783"/>
    </ligand>
</feature>
<feature type="binding site" evidence="1">
    <location>
        <position position="198"/>
    </location>
    <ligand>
        <name>sn-glycerol 3-phosphate</name>
        <dbReference type="ChEBI" id="CHEBI:57597"/>
    </ligand>
</feature>
<feature type="binding site" evidence="1">
    <location>
        <position position="251"/>
    </location>
    <ligand>
        <name>sn-glycerol 3-phosphate</name>
        <dbReference type="ChEBI" id="CHEBI:57597"/>
    </ligand>
</feature>
<feature type="binding site" evidence="1">
    <location>
        <position position="261"/>
    </location>
    <ligand>
        <name>sn-glycerol 3-phosphate</name>
        <dbReference type="ChEBI" id="CHEBI:57597"/>
    </ligand>
</feature>
<feature type="binding site" evidence="1">
    <location>
        <position position="262"/>
    </location>
    <ligand>
        <name>NADPH</name>
        <dbReference type="ChEBI" id="CHEBI:57783"/>
    </ligand>
</feature>
<feature type="binding site" evidence="1">
    <location>
        <position position="262"/>
    </location>
    <ligand>
        <name>sn-glycerol 3-phosphate</name>
        <dbReference type="ChEBI" id="CHEBI:57597"/>
    </ligand>
</feature>
<feature type="binding site" evidence="1">
    <location>
        <position position="263"/>
    </location>
    <ligand>
        <name>sn-glycerol 3-phosphate</name>
        <dbReference type="ChEBI" id="CHEBI:57597"/>
    </ligand>
</feature>
<feature type="binding site" evidence="1">
    <location>
        <position position="286"/>
    </location>
    <ligand>
        <name>NADPH</name>
        <dbReference type="ChEBI" id="CHEBI:57783"/>
    </ligand>
</feature>
<feature type="binding site" evidence="1">
    <location>
        <position position="288"/>
    </location>
    <ligand>
        <name>NADPH</name>
        <dbReference type="ChEBI" id="CHEBI:57783"/>
    </ligand>
</feature>
<comment type="function">
    <text evidence="1">Catalyzes the reduction of the glycolytic intermediate dihydroxyacetone phosphate (DHAP) to sn-glycerol 3-phosphate (G3P), the key precursor for phospholipid synthesis.</text>
</comment>
<comment type="catalytic activity">
    <reaction evidence="1">
        <text>sn-glycerol 3-phosphate + NAD(+) = dihydroxyacetone phosphate + NADH + H(+)</text>
        <dbReference type="Rhea" id="RHEA:11092"/>
        <dbReference type="ChEBI" id="CHEBI:15378"/>
        <dbReference type="ChEBI" id="CHEBI:57540"/>
        <dbReference type="ChEBI" id="CHEBI:57597"/>
        <dbReference type="ChEBI" id="CHEBI:57642"/>
        <dbReference type="ChEBI" id="CHEBI:57945"/>
        <dbReference type="EC" id="1.1.1.94"/>
    </reaction>
    <physiologicalReaction direction="right-to-left" evidence="1">
        <dbReference type="Rhea" id="RHEA:11094"/>
    </physiologicalReaction>
</comment>
<comment type="catalytic activity">
    <reaction evidence="1">
        <text>sn-glycerol 3-phosphate + NADP(+) = dihydroxyacetone phosphate + NADPH + H(+)</text>
        <dbReference type="Rhea" id="RHEA:11096"/>
        <dbReference type="ChEBI" id="CHEBI:15378"/>
        <dbReference type="ChEBI" id="CHEBI:57597"/>
        <dbReference type="ChEBI" id="CHEBI:57642"/>
        <dbReference type="ChEBI" id="CHEBI:57783"/>
        <dbReference type="ChEBI" id="CHEBI:58349"/>
        <dbReference type="EC" id="1.1.1.94"/>
    </reaction>
    <physiologicalReaction direction="right-to-left" evidence="1">
        <dbReference type="Rhea" id="RHEA:11098"/>
    </physiologicalReaction>
</comment>
<comment type="pathway">
    <text evidence="1">Membrane lipid metabolism; glycerophospholipid metabolism.</text>
</comment>
<comment type="subcellular location">
    <subcellularLocation>
        <location evidence="1">Cytoplasm</location>
    </subcellularLocation>
</comment>
<comment type="similarity">
    <text evidence="1">Belongs to the NAD-dependent glycerol-3-phosphate dehydrogenase family.</text>
</comment>
<organism>
    <name type="scientific">Photobacterium profundum (strain SS9)</name>
    <dbReference type="NCBI Taxonomy" id="298386"/>
    <lineage>
        <taxon>Bacteria</taxon>
        <taxon>Pseudomonadati</taxon>
        <taxon>Pseudomonadota</taxon>
        <taxon>Gammaproteobacteria</taxon>
        <taxon>Vibrionales</taxon>
        <taxon>Vibrionaceae</taxon>
        <taxon>Photobacterium</taxon>
    </lineage>
</organism>
<sequence>MNQNVNNAITMTVLGAGSYGTSLAISLARYGANVILWGHDAEHIAQLEIDRANEAFLPGVAFPESLILSADLEMAVQASRDLLVVVPSHVFGLVLSDVKPFLREDSRICWATKGLEPETGRLLKEVAVDAVGAEVPLAVLSGPTFAKELAAGMPTAIAVSSPDDAFVEDLQEKIHCSKTFRVYSNSDFIGMQLGGAVKNVIAIGAGMSDGIGFGANARTALITRGLAEMCRLGAALGAQKETFMGMAGLGDLVLTCTDNQSRNRRFGLALGQGKSVDQAQIDIGQVVEGYRNTKEVWALAQRYGVEMPISEQIYQVLYQGKDAREAAKDLLARDKKYE</sequence>